<name>UPP_RALPJ</name>
<evidence type="ECO:0000255" key="1">
    <source>
        <dbReference type="HAMAP-Rule" id="MF_01218"/>
    </source>
</evidence>
<keyword id="KW-0021">Allosteric enzyme</keyword>
<keyword id="KW-0328">Glycosyltransferase</keyword>
<keyword id="KW-0342">GTP-binding</keyword>
<keyword id="KW-0460">Magnesium</keyword>
<keyword id="KW-0547">Nucleotide-binding</keyword>
<keyword id="KW-0808">Transferase</keyword>
<organism>
    <name type="scientific">Ralstonia pickettii (strain 12J)</name>
    <dbReference type="NCBI Taxonomy" id="402626"/>
    <lineage>
        <taxon>Bacteria</taxon>
        <taxon>Pseudomonadati</taxon>
        <taxon>Pseudomonadota</taxon>
        <taxon>Betaproteobacteria</taxon>
        <taxon>Burkholderiales</taxon>
        <taxon>Burkholderiaceae</taxon>
        <taxon>Ralstonia</taxon>
    </lineage>
</organism>
<accession>B2U8Z0</accession>
<comment type="function">
    <text evidence="1">Catalyzes the conversion of uracil and 5-phospho-alpha-D-ribose 1-diphosphate (PRPP) to UMP and diphosphate.</text>
</comment>
<comment type="catalytic activity">
    <reaction evidence="1">
        <text>UMP + diphosphate = 5-phospho-alpha-D-ribose 1-diphosphate + uracil</text>
        <dbReference type="Rhea" id="RHEA:13017"/>
        <dbReference type="ChEBI" id="CHEBI:17568"/>
        <dbReference type="ChEBI" id="CHEBI:33019"/>
        <dbReference type="ChEBI" id="CHEBI:57865"/>
        <dbReference type="ChEBI" id="CHEBI:58017"/>
        <dbReference type="EC" id="2.4.2.9"/>
    </reaction>
</comment>
<comment type="cofactor">
    <cofactor evidence="1">
        <name>Mg(2+)</name>
        <dbReference type="ChEBI" id="CHEBI:18420"/>
    </cofactor>
    <text evidence="1">Binds 1 Mg(2+) ion per subunit. The magnesium is bound as Mg-PRPP.</text>
</comment>
<comment type="activity regulation">
    <text evidence="1">Allosterically activated by GTP.</text>
</comment>
<comment type="pathway">
    <text evidence="1">Pyrimidine metabolism; UMP biosynthesis via salvage pathway; UMP from uracil: step 1/1.</text>
</comment>
<comment type="similarity">
    <text evidence="1">Belongs to the UPRTase family.</text>
</comment>
<proteinExistence type="inferred from homology"/>
<gene>
    <name evidence="1" type="primary">upp</name>
    <name type="ordered locus">Rpic_2386</name>
</gene>
<dbReference type="EC" id="2.4.2.9" evidence="1"/>
<dbReference type="EMBL" id="CP001068">
    <property type="protein sequence ID" value="ACD27520.1"/>
    <property type="molecule type" value="Genomic_DNA"/>
</dbReference>
<dbReference type="SMR" id="B2U8Z0"/>
<dbReference type="STRING" id="402626.Rpic_2386"/>
<dbReference type="KEGG" id="rpi:Rpic_2386"/>
<dbReference type="eggNOG" id="COG0035">
    <property type="taxonomic scope" value="Bacteria"/>
</dbReference>
<dbReference type="HOGENOM" id="CLU_067096_2_2_4"/>
<dbReference type="UniPathway" id="UPA00574">
    <property type="reaction ID" value="UER00636"/>
</dbReference>
<dbReference type="GO" id="GO:0005525">
    <property type="term" value="F:GTP binding"/>
    <property type="evidence" value="ECO:0007669"/>
    <property type="project" value="UniProtKB-KW"/>
</dbReference>
<dbReference type="GO" id="GO:0000287">
    <property type="term" value="F:magnesium ion binding"/>
    <property type="evidence" value="ECO:0007669"/>
    <property type="project" value="UniProtKB-UniRule"/>
</dbReference>
<dbReference type="GO" id="GO:0004845">
    <property type="term" value="F:uracil phosphoribosyltransferase activity"/>
    <property type="evidence" value="ECO:0007669"/>
    <property type="project" value="UniProtKB-UniRule"/>
</dbReference>
<dbReference type="GO" id="GO:0044206">
    <property type="term" value="P:UMP salvage"/>
    <property type="evidence" value="ECO:0007669"/>
    <property type="project" value="UniProtKB-UniRule"/>
</dbReference>
<dbReference type="GO" id="GO:0006223">
    <property type="term" value="P:uracil salvage"/>
    <property type="evidence" value="ECO:0007669"/>
    <property type="project" value="InterPro"/>
</dbReference>
<dbReference type="CDD" id="cd06223">
    <property type="entry name" value="PRTases_typeI"/>
    <property type="match status" value="1"/>
</dbReference>
<dbReference type="FunFam" id="3.40.50.2020:FF:000003">
    <property type="entry name" value="Uracil phosphoribosyltransferase"/>
    <property type="match status" value="1"/>
</dbReference>
<dbReference type="Gene3D" id="3.40.50.2020">
    <property type="match status" value="1"/>
</dbReference>
<dbReference type="HAMAP" id="MF_01218_B">
    <property type="entry name" value="Upp_B"/>
    <property type="match status" value="1"/>
</dbReference>
<dbReference type="InterPro" id="IPR000836">
    <property type="entry name" value="PRibTrfase_dom"/>
</dbReference>
<dbReference type="InterPro" id="IPR029057">
    <property type="entry name" value="PRTase-like"/>
</dbReference>
<dbReference type="InterPro" id="IPR034332">
    <property type="entry name" value="Upp_B"/>
</dbReference>
<dbReference type="InterPro" id="IPR050054">
    <property type="entry name" value="UPRTase/APRTase"/>
</dbReference>
<dbReference type="InterPro" id="IPR005765">
    <property type="entry name" value="Ura_phspho_trans"/>
</dbReference>
<dbReference type="NCBIfam" id="NF001097">
    <property type="entry name" value="PRK00129.1"/>
    <property type="match status" value="1"/>
</dbReference>
<dbReference type="NCBIfam" id="TIGR01091">
    <property type="entry name" value="upp"/>
    <property type="match status" value="1"/>
</dbReference>
<dbReference type="PANTHER" id="PTHR32315">
    <property type="entry name" value="ADENINE PHOSPHORIBOSYLTRANSFERASE"/>
    <property type="match status" value="1"/>
</dbReference>
<dbReference type="PANTHER" id="PTHR32315:SF4">
    <property type="entry name" value="URACIL PHOSPHORIBOSYLTRANSFERASE, CHLOROPLASTIC"/>
    <property type="match status" value="1"/>
</dbReference>
<dbReference type="Pfam" id="PF14681">
    <property type="entry name" value="UPRTase"/>
    <property type="match status" value="1"/>
</dbReference>
<dbReference type="SUPFAM" id="SSF53271">
    <property type="entry name" value="PRTase-like"/>
    <property type="match status" value="1"/>
</dbReference>
<sequence length="216" mass="24001">MKQDPRFPNLSILNHPLIQHKLTHMRDKDTSTRTFRELLREITLLMGYEITRNLPLTSRHIDTPMGPMEAPVIAGRKLAVVPVLRAGVGMSDGLVELIPSARIGHIGVYRDDQHRPVEYLVRLPDLEDRTFILCDPMVATGYSAVHAVDVMKKRGVPDENILFLALVAAPEGVEVFQKAHPGVKLFVASLDSHLDENAYIIPGLGDAGDRLFGTKN</sequence>
<protein>
    <recommendedName>
        <fullName evidence="1">Uracil phosphoribosyltransferase</fullName>
        <ecNumber evidence="1">2.4.2.9</ecNumber>
    </recommendedName>
    <alternativeName>
        <fullName evidence="1">UMP pyrophosphorylase</fullName>
    </alternativeName>
    <alternativeName>
        <fullName evidence="1">UPRTase</fullName>
    </alternativeName>
</protein>
<feature type="chain" id="PRO_1000139150" description="Uracil phosphoribosyltransferase">
    <location>
        <begin position="1"/>
        <end position="216"/>
    </location>
</feature>
<feature type="binding site" evidence="1">
    <location>
        <position position="85"/>
    </location>
    <ligand>
        <name>5-phospho-alpha-D-ribose 1-diphosphate</name>
        <dbReference type="ChEBI" id="CHEBI:58017"/>
    </ligand>
</feature>
<feature type="binding site" evidence="1">
    <location>
        <position position="110"/>
    </location>
    <ligand>
        <name>5-phospho-alpha-D-ribose 1-diphosphate</name>
        <dbReference type="ChEBI" id="CHEBI:58017"/>
    </ligand>
</feature>
<feature type="binding site" evidence="1">
    <location>
        <begin position="135"/>
        <end position="143"/>
    </location>
    <ligand>
        <name>5-phospho-alpha-D-ribose 1-diphosphate</name>
        <dbReference type="ChEBI" id="CHEBI:58017"/>
    </ligand>
</feature>
<feature type="binding site" evidence="1">
    <location>
        <position position="200"/>
    </location>
    <ligand>
        <name>uracil</name>
        <dbReference type="ChEBI" id="CHEBI:17568"/>
    </ligand>
</feature>
<feature type="binding site" evidence="1">
    <location>
        <begin position="205"/>
        <end position="207"/>
    </location>
    <ligand>
        <name>uracil</name>
        <dbReference type="ChEBI" id="CHEBI:17568"/>
    </ligand>
</feature>
<feature type="binding site" evidence="1">
    <location>
        <position position="206"/>
    </location>
    <ligand>
        <name>5-phospho-alpha-D-ribose 1-diphosphate</name>
        <dbReference type="ChEBI" id="CHEBI:58017"/>
    </ligand>
</feature>
<reference key="1">
    <citation type="submission" date="2008-05" db="EMBL/GenBank/DDBJ databases">
        <title>Complete sequence of chromosome 1 of Ralstonia pickettii 12J.</title>
        <authorList>
            <person name="Lucas S."/>
            <person name="Copeland A."/>
            <person name="Lapidus A."/>
            <person name="Glavina del Rio T."/>
            <person name="Dalin E."/>
            <person name="Tice H."/>
            <person name="Bruce D."/>
            <person name="Goodwin L."/>
            <person name="Pitluck S."/>
            <person name="Meincke L."/>
            <person name="Brettin T."/>
            <person name="Detter J.C."/>
            <person name="Han C."/>
            <person name="Kuske C.R."/>
            <person name="Schmutz J."/>
            <person name="Larimer F."/>
            <person name="Land M."/>
            <person name="Hauser L."/>
            <person name="Kyrpides N."/>
            <person name="Mikhailova N."/>
            <person name="Marsh T."/>
            <person name="Richardson P."/>
        </authorList>
    </citation>
    <scope>NUCLEOTIDE SEQUENCE [LARGE SCALE GENOMIC DNA]</scope>
    <source>
        <strain>12J</strain>
    </source>
</reference>